<keyword id="KW-0002">3D-structure</keyword>
<keyword id="KW-0194">Cyanelle</keyword>
<keyword id="KW-0408">Iron</keyword>
<keyword id="KW-0479">Metal-binding</keyword>
<keyword id="KW-0934">Plastid</keyword>
<accession>P48329</accession>
<name>SYMRN_CYAPA</name>
<protein>
    <recommendedName>
        <fullName evidence="4">Symerythrin</fullName>
    </recommendedName>
    <alternativeName>
        <fullName>ORF180</fullName>
    </alternativeName>
</protein>
<proteinExistence type="evidence at protein level"/>
<sequence>MGLNYNQEDFMGLDRFFQDAVSHNNTDANAASSIEVEMYECDCMYPTFAEIARRSGQPEIGAMFDAIAKEEGMHAQLLTKLYSELEVKDSAETLEAKRLVSTIESQIDAVASDSRGLRRALETALEVETIESQKTYPAFAKLAAEQGNMEVATAFEAIVKSETKHANWVKRALENLLEVA</sequence>
<comment type="function">
    <text evidence="3">Exhibits oxidase-like and peroxidase-like activities in vitro.</text>
</comment>
<comment type="cofactor">
    <cofactor evidence="2 3">
        <name>Fe(3+)</name>
        <dbReference type="ChEBI" id="CHEBI:29034"/>
    </cofactor>
    <text evidence="2 3">Binds 2 Fe(3+) ions per subunit (PubMed:21596985, PubMed:21872605). In the diferric oxidized state, His-74 does not coordinate iron but, in the reduced state, the iron 1 ion shifts by 2 Angstroms resulting in binding to His-74 and loss of the interactions with Glu-40 and Glu-131 (PubMed:21872605).</text>
</comment>
<comment type="subunit">
    <text evidence="3">Monomer.</text>
</comment>
<comment type="subcellular location">
    <subcellularLocation>
        <location>Plastid</location>
        <location>Cyanelle</location>
    </subcellularLocation>
</comment>
<comment type="miscellaneous">
    <text evidence="4">The name 'symerythrin' reflects the protein's high level of internal symmetry.</text>
</comment>
<reference key="1">
    <citation type="journal article" date="1995" name="Plant Mol. Biol. Rep.">
        <title>Nucleotide sequence of the cyanelle DNA from Cyanophora paradoxa.</title>
        <authorList>
            <person name="Stirewalt V.L."/>
            <person name="Michalowski C.B."/>
            <person name="Loeffelhardt W."/>
            <person name="Bohnert H.J."/>
            <person name="Bryant D.A."/>
        </authorList>
    </citation>
    <scope>NUCLEOTIDE SEQUENCE [LARGE SCALE GENOMIC DNA]</scope>
    <source>
        <strain>UTEX LB 555 / Pringsheim</strain>
    </source>
</reference>
<reference key="2">
    <citation type="book" date="1997" name="Eukaryotism and symbiosis">
        <title>The complete sequence of the cyanelle genome of Cyanophora paradoxa: the genetic complexity of a primitive plastid.</title>
        <editorList>
            <person name="Schenk H.E.A."/>
            <person name="Herrmann R."/>
            <person name="Jeon K.W."/>
            <person name="Mueller N.E."/>
            <person name="Schwemmler W."/>
        </editorList>
        <authorList>
            <person name="Loeffelhardt W."/>
            <person name="Stirewalt V.L."/>
            <person name="Michalowski C.B."/>
            <person name="Annarella M."/>
            <person name="Farley J.Y."/>
            <person name="Schluchter W.M."/>
            <person name="Chung S."/>
            <person name="Newmann-Spallart C."/>
            <person name="Steiner J.M."/>
            <person name="Jakowitsch J."/>
            <person name="Bohnert H.J."/>
            <person name="Bryant D.A."/>
        </authorList>
    </citation>
    <scope>NUCLEOTIDE SEQUENCE [LARGE SCALE GENOMIC DNA]</scope>
    <source>
        <strain>UTEX LB 555 / Pringsheim</strain>
    </source>
</reference>
<reference evidence="6 7" key="3">
    <citation type="journal article" date="2011" name="J. Mol. Biol.">
        <title>Symerythrin structures at atomic resolution and the origins of rubrerythrins and the ferritin-like superfamily.</title>
        <authorList>
            <person name="Cooley R.B."/>
            <person name="Arp D.J."/>
            <person name="Karplus P.A."/>
        </authorList>
    </citation>
    <scope>X-RAY CRYSTALLOGRAPHY (1.25 ANGSTROMS) OF 2-180 IN COMPLEX WITH FE(3+)</scope>
    <scope>FUNCTION</scope>
    <scope>SUBUNIT</scope>
</reference>
<reference evidence="5" key="4">
    <citation type="journal article" date="2011" name="Science">
        <title>A diiron protein autogenerates a valine-phenylalanine cross-link.</title>
        <authorList>
            <person name="Cooley R.B."/>
            <person name="Rhoads T.W."/>
            <person name="Arp D.J."/>
            <person name="Karplus P.A."/>
        </authorList>
    </citation>
    <scope>X-RAY CRYSTALLOGRAPHY (1.20 ANGSTROMS) OF 2-180 IN COMPLEX WITH FE(3+)</scope>
    <scope>CROSS-LINK</scope>
</reference>
<dbReference type="EMBL" id="U30821">
    <property type="protein sequence ID" value="AAA81276.1"/>
    <property type="molecule type" value="Genomic_DNA"/>
</dbReference>
<dbReference type="PIR" id="T06933">
    <property type="entry name" value="T06933"/>
</dbReference>
<dbReference type="RefSeq" id="NP_043245.1">
    <property type="nucleotide sequence ID" value="NC_001675.1"/>
</dbReference>
<dbReference type="PDB" id="3QHB">
    <property type="method" value="X-ray"/>
    <property type="resolution" value="1.20 A"/>
    <property type="chains" value="A/B=2-180"/>
</dbReference>
<dbReference type="PDB" id="3QHC">
    <property type="method" value="X-ray"/>
    <property type="resolution" value="1.25 A"/>
    <property type="chains" value="A/B=2-180"/>
</dbReference>
<dbReference type="PDB" id="3SID">
    <property type="method" value="X-ray"/>
    <property type="resolution" value="1.40 A"/>
    <property type="chains" value="A/B=1-180"/>
</dbReference>
<dbReference type="PDBsum" id="3QHB"/>
<dbReference type="PDBsum" id="3QHC"/>
<dbReference type="PDBsum" id="3SID"/>
<dbReference type="SMR" id="P48329"/>
<dbReference type="GeneID" id="801647"/>
<dbReference type="EvolutionaryTrace" id="P48329"/>
<dbReference type="GO" id="GO:0009842">
    <property type="term" value="C:cyanelle"/>
    <property type="evidence" value="ECO:0007669"/>
    <property type="project" value="UniProtKB-SubCell"/>
</dbReference>
<dbReference type="GO" id="GO:0008199">
    <property type="term" value="F:ferric iron binding"/>
    <property type="evidence" value="ECO:0000314"/>
    <property type="project" value="UniProtKB"/>
</dbReference>
<dbReference type="GO" id="GO:0016491">
    <property type="term" value="F:oxidoreductase activity"/>
    <property type="evidence" value="ECO:0007669"/>
    <property type="project" value="InterPro"/>
</dbReference>
<dbReference type="CDD" id="cd01041">
    <property type="entry name" value="Rubrerythrin"/>
    <property type="match status" value="1"/>
</dbReference>
<dbReference type="Gene3D" id="1.20.1260.10">
    <property type="match status" value="1"/>
</dbReference>
<dbReference type="InterPro" id="IPR012347">
    <property type="entry name" value="Ferritin-like"/>
</dbReference>
<dbReference type="InterPro" id="IPR009040">
    <property type="entry name" value="Ferritin-like_diiron"/>
</dbReference>
<dbReference type="InterPro" id="IPR009078">
    <property type="entry name" value="Ferritin-like_SF"/>
</dbReference>
<dbReference type="InterPro" id="IPR052753">
    <property type="entry name" value="Rbr2/Nigerythrin"/>
</dbReference>
<dbReference type="InterPro" id="IPR003251">
    <property type="entry name" value="Rr_diiron-bd_dom"/>
</dbReference>
<dbReference type="PANTHER" id="PTHR33746">
    <property type="entry name" value="RUBRERYTHRIN"/>
    <property type="match status" value="1"/>
</dbReference>
<dbReference type="PANTHER" id="PTHR33746:SF4">
    <property type="entry name" value="RUBRERYTHRIN"/>
    <property type="match status" value="1"/>
</dbReference>
<dbReference type="Pfam" id="PF02915">
    <property type="entry name" value="Rubrerythrin"/>
    <property type="match status" value="1"/>
</dbReference>
<dbReference type="SUPFAM" id="SSF47240">
    <property type="entry name" value="Ferritin-like"/>
    <property type="match status" value="1"/>
</dbReference>
<dbReference type="PROSITE" id="PS50905">
    <property type="entry name" value="FERRITIN_LIKE"/>
    <property type="match status" value="1"/>
</dbReference>
<organism>
    <name type="scientific">Cyanophora paradoxa</name>
    <dbReference type="NCBI Taxonomy" id="2762"/>
    <lineage>
        <taxon>Eukaryota</taxon>
        <taxon>Glaucocystophyceae</taxon>
        <taxon>Cyanophoraceae</taxon>
        <taxon>Cyanophora</taxon>
    </lineage>
</organism>
<evidence type="ECO:0000255" key="1">
    <source>
        <dbReference type="PROSITE-ProRule" id="PRU00085"/>
    </source>
</evidence>
<evidence type="ECO:0000269" key="2">
    <source>
    </source>
</evidence>
<evidence type="ECO:0000269" key="3">
    <source>
    </source>
</evidence>
<evidence type="ECO:0000303" key="4">
    <source>
    </source>
</evidence>
<evidence type="ECO:0007744" key="5">
    <source>
        <dbReference type="PDB" id="3QHB"/>
    </source>
</evidence>
<evidence type="ECO:0007744" key="6">
    <source>
        <dbReference type="PDB" id="3QHC"/>
    </source>
</evidence>
<evidence type="ECO:0007744" key="7">
    <source>
        <dbReference type="PDB" id="3SID"/>
    </source>
</evidence>
<evidence type="ECO:0007829" key="8">
    <source>
        <dbReference type="PDB" id="3QHB"/>
    </source>
</evidence>
<geneLocation type="cyanelle"/>
<feature type="chain" id="PRO_0000135068" description="Symerythrin">
    <location>
        <begin position="1"/>
        <end position="180"/>
    </location>
</feature>
<feature type="domain" description="Ferritin-like diiron" evidence="1">
    <location>
        <begin position="21"/>
        <end position="180"/>
    </location>
</feature>
<feature type="binding site" evidence="2 3 5 6 7">
    <location>
        <position position="37"/>
    </location>
    <ligand>
        <name>Fe(3+)</name>
        <dbReference type="ChEBI" id="CHEBI:29034"/>
        <label>1</label>
    </ligand>
</feature>
<feature type="binding site" evidence="2 3 5 6 7">
    <location>
        <position position="40"/>
    </location>
    <ligand>
        <name>Fe(3+)</name>
        <dbReference type="ChEBI" id="CHEBI:29034"/>
        <label>1</label>
    </ligand>
</feature>
<feature type="binding site" evidence="2 3 5 6 7">
    <location>
        <position position="71"/>
    </location>
    <ligand>
        <name>Fe(3+)</name>
        <dbReference type="ChEBI" id="CHEBI:29034"/>
        <label>1</label>
    </ligand>
</feature>
<feature type="binding site" evidence="2 3 6 7">
    <location>
        <position position="71"/>
    </location>
    <ligand>
        <name>Fe(3+)</name>
        <dbReference type="ChEBI" id="CHEBI:29034"/>
        <label>2</label>
    </ligand>
</feature>
<feature type="binding site" evidence="2 3 6 7">
    <location>
        <position position="128"/>
    </location>
    <ligand>
        <name>Fe(3+)</name>
        <dbReference type="ChEBI" id="CHEBI:29034"/>
        <label>2</label>
    </ligand>
</feature>
<feature type="binding site" evidence="2 3 5 6 7">
    <location>
        <position position="131"/>
    </location>
    <ligand>
        <name>Fe(3+)</name>
        <dbReference type="ChEBI" id="CHEBI:29034"/>
        <label>1</label>
    </ligand>
</feature>
<feature type="binding site" evidence="2 3 5 6 7">
    <location>
        <position position="162"/>
    </location>
    <ligand>
        <name>Fe(3+)</name>
        <dbReference type="ChEBI" id="CHEBI:29034"/>
        <label>1</label>
    </ligand>
</feature>
<feature type="binding site" evidence="2 3 6 7">
    <location>
        <position position="162"/>
    </location>
    <ligand>
        <name>Fe(3+)</name>
        <dbReference type="ChEBI" id="CHEBI:29034"/>
        <label>2</label>
    </ligand>
</feature>
<feature type="binding site" evidence="2 3 6 7">
    <location>
        <position position="165"/>
    </location>
    <ligand>
        <name>Fe(3+)</name>
        <dbReference type="ChEBI" id="CHEBI:29034"/>
        <label>2</label>
    </ligand>
</feature>
<feature type="cross-link" description="3-(L-phenylalan-2'-yl)-L-valine (Phe-Val)" evidence="2">
    <location>
        <begin position="17"/>
        <end position="127"/>
    </location>
</feature>
<feature type="helix" evidence="8">
    <location>
        <begin position="10"/>
        <end position="16"/>
    </location>
</feature>
<feature type="helix" evidence="8">
    <location>
        <begin position="26"/>
        <end position="42"/>
    </location>
</feature>
<feature type="helix" evidence="8">
    <location>
        <begin position="44"/>
        <end position="54"/>
    </location>
</feature>
<feature type="helix" evidence="8">
    <location>
        <begin position="58"/>
        <end position="81"/>
    </location>
</feature>
<feature type="helix" evidence="8">
    <location>
        <begin position="91"/>
        <end position="105"/>
    </location>
</feature>
<feature type="helix" evidence="8">
    <location>
        <begin position="107"/>
        <end position="112"/>
    </location>
</feature>
<feature type="helix" evidence="8">
    <location>
        <begin position="115"/>
        <end position="133"/>
    </location>
</feature>
<feature type="helix" evidence="8">
    <location>
        <begin position="135"/>
        <end position="145"/>
    </location>
</feature>
<feature type="helix" evidence="8">
    <location>
        <begin position="149"/>
        <end position="177"/>
    </location>
</feature>